<organismHost>
    <name type="scientific">Homo sapiens</name>
    <name type="common">Human</name>
    <dbReference type="NCBI Taxonomy" id="9606"/>
</organismHost>
<comment type="function">
    <text>Excises uracil residues from the DNA which can arise as a result of misincorporation of dUMP residues by DNA polymerase or due to deamination of cytosine.</text>
</comment>
<comment type="function">
    <text evidence="1">Excises uracil residues from the DNA which can arise as a result of misincorporation of dUMP residues by DNA polymerase or deamination of cytosines. Therefore may reduce deleterious uracil incorporation into the viral genome, particularly in terminally differentiated cells which lack DNA repair enzymes.</text>
</comment>
<comment type="catalytic activity">
    <reaction evidence="1">
        <text>Hydrolyzes single-stranded DNA or mismatched double-stranded DNA and polynucleotides, releasing free uracil.</text>
        <dbReference type="EC" id="3.2.2.27"/>
    </reaction>
</comment>
<comment type="subcellular location">
    <subcellularLocation>
        <location evidence="1">Host nucleus</location>
    </subcellularLocation>
</comment>
<comment type="similarity">
    <text evidence="1">Belongs to the uracil-DNA glycosylase (UDG) superfamily. UNG family.</text>
</comment>
<evidence type="ECO:0000255" key="1">
    <source>
        <dbReference type="HAMAP-Rule" id="MF_04046"/>
    </source>
</evidence>
<proteinExistence type="inferred from homology"/>
<keyword id="KW-0227">DNA damage</keyword>
<keyword id="KW-0234">DNA repair</keyword>
<keyword id="KW-1048">Host nucleus</keyword>
<keyword id="KW-0378">Hydrolase</keyword>
<keyword id="KW-1185">Reference proteome</keyword>
<gene>
    <name type="primary">UL114</name>
</gene>
<protein>
    <recommendedName>
        <fullName evidence="1">Uracil-DNA glycosylase</fullName>
        <shortName evidence="1">UDG</shortName>
        <ecNumber evidence="1">3.2.2.27</ecNumber>
    </recommendedName>
    <alternativeName>
        <fullName evidence="1">UNG</fullName>
    </alternativeName>
</protein>
<name>UNG_HCMVA</name>
<reference key="1">
    <citation type="journal article" date="1990" name="Curr. Top. Microbiol. Immunol.">
        <title>Analysis of the protein-coding content of the sequence of human cytomegalovirus strain AD169.</title>
        <authorList>
            <person name="Chee M.S."/>
            <person name="Bankier A.T."/>
            <person name="Beck S."/>
            <person name="Bohni R."/>
            <person name="Brown C.M."/>
            <person name="Cerny R."/>
            <person name="Horsnell T."/>
            <person name="Hutchison C.A. III"/>
            <person name="Kouzarides T."/>
            <person name="Martignetti J.A."/>
            <person name="Preddie E."/>
            <person name="Satchwell S.C."/>
            <person name="Tomlinson P."/>
            <person name="Weston K.M."/>
            <person name="Barrell B.G."/>
        </authorList>
    </citation>
    <scope>NUCLEOTIDE SEQUENCE [GENOMIC DNA]</scope>
</reference>
<reference key="2">
    <citation type="journal article" date="2003" name="J. Gen. Virol.">
        <title>The human cytomegalovirus genome revisited: comparison with the chimpanzee cytomegalovirus genome.</title>
        <authorList>
            <person name="Davison A.J."/>
            <person name="Dolan A."/>
            <person name="Akter P."/>
            <person name="Addison C."/>
            <person name="Dargan D.J."/>
            <person name="Alcendor D.J."/>
            <person name="McGeoch D.J."/>
            <person name="Hayward G.S."/>
        </authorList>
    </citation>
    <scope>GENOME REANNOTATION</scope>
</reference>
<reference key="3">
    <citation type="journal article" date="2003" name="J. Gen. Virol.">
        <authorList>
            <person name="Davison A.J."/>
            <person name="Dolan A."/>
            <person name="Akter P."/>
            <person name="Addison C."/>
            <person name="Dargan D.J."/>
            <person name="Alcendor D.J."/>
            <person name="McGeoch D.J."/>
            <person name="Hayward G.S."/>
        </authorList>
    </citation>
    <scope>ERRATUM OF PUBMED:12533697</scope>
</reference>
<feature type="chain" id="PRO_0000176184" description="Uracil-DNA glycosylase">
    <location>
        <begin position="1"/>
        <end position="250"/>
    </location>
</feature>
<feature type="active site" description="Proton acceptor" evidence="1">
    <location>
        <position position="91"/>
    </location>
</feature>
<organism>
    <name type="scientific">Human cytomegalovirus (strain AD169)</name>
    <name type="common">HHV-5</name>
    <name type="synonym">Human herpesvirus 5</name>
    <dbReference type="NCBI Taxonomy" id="10360"/>
    <lineage>
        <taxon>Viruses</taxon>
        <taxon>Duplodnaviria</taxon>
        <taxon>Heunggongvirae</taxon>
        <taxon>Peploviricota</taxon>
        <taxon>Herviviricetes</taxon>
        <taxon>Herpesvirales</taxon>
        <taxon>Orthoherpesviridae</taxon>
        <taxon>Betaherpesvirinae</taxon>
        <taxon>Cytomegalovirus</taxon>
        <taxon>Cytomegalovirus humanbeta5</taxon>
        <taxon>Human cytomegalovirus</taxon>
    </lineage>
</organism>
<accession>P16769</accession>
<accession>Q7M6T0</accession>
<dbReference type="EC" id="3.2.2.27" evidence="1"/>
<dbReference type="EMBL" id="X17403">
    <property type="protein sequence ID" value="CAA35316.1"/>
    <property type="molecule type" value="Genomic_DNA"/>
</dbReference>
<dbReference type="EMBL" id="BK000394">
    <property type="protein sequence ID" value="DAA00104.1"/>
    <property type="molecule type" value="Genomic_DNA"/>
</dbReference>
<dbReference type="PIR" id="S09881">
    <property type="entry name" value="DGBEL5"/>
</dbReference>
<dbReference type="RefSeq" id="YP_081554.1">
    <property type="nucleotide sequence ID" value="NC_006273.2"/>
</dbReference>
<dbReference type="SMR" id="P16769"/>
<dbReference type="BioGRID" id="1678092">
    <property type="interactions" value="1"/>
</dbReference>
<dbReference type="GeneID" id="3077539"/>
<dbReference type="KEGG" id="vg:3077539"/>
<dbReference type="Proteomes" id="UP000008991">
    <property type="component" value="Segment"/>
</dbReference>
<dbReference type="Proteomes" id="UP000008992">
    <property type="component" value="Segment"/>
</dbReference>
<dbReference type="GO" id="GO:0042025">
    <property type="term" value="C:host cell nucleus"/>
    <property type="evidence" value="ECO:0007669"/>
    <property type="project" value="UniProtKB-SubCell"/>
</dbReference>
<dbReference type="GO" id="GO:0004844">
    <property type="term" value="F:uracil DNA N-glycosylase activity"/>
    <property type="evidence" value="ECO:0007669"/>
    <property type="project" value="UniProtKB-EC"/>
</dbReference>
<dbReference type="GO" id="GO:0097510">
    <property type="term" value="P:base-excision repair, AP site formation via deaminated base removal"/>
    <property type="evidence" value="ECO:0007669"/>
    <property type="project" value="TreeGrafter"/>
</dbReference>
<dbReference type="CDD" id="cd10027">
    <property type="entry name" value="UDG-F1-like"/>
    <property type="match status" value="1"/>
</dbReference>
<dbReference type="Gene3D" id="3.40.470.10">
    <property type="entry name" value="Uracil-DNA glycosylase-like domain"/>
    <property type="match status" value="1"/>
</dbReference>
<dbReference type="HAMAP" id="MF_00148">
    <property type="entry name" value="UDG"/>
    <property type="match status" value="1"/>
</dbReference>
<dbReference type="InterPro" id="IPR002043">
    <property type="entry name" value="UDG_fam1"/>
</dbReference>
<dbReference type="InterPro" id="IPR018085">
    <property type="entry name" value="Ura-DNA_Glyclase_AS"/>
</dbReference>
<dbReference type="InterPro" id="IPR005122">
    <property type="entry name" value="Uracil-DNA_glycosylase-like"/>
</dbReference>
<dbReference type="InterPro" id="IPR036895">
    <property type="entry name" value="Uracil-DNA_glycosylase-like_sf"/>
</dbReference>
<dbReference type="NCBIfam" id="NF003588">
    <property type="entry name" value="PRK05254.1-1"/>
    <property type="match status" value="1"/>
</dbReference>
<dbReference type="NCBIfam" id="NF003589">
    <property type="entry name" value="PRK05254.1-2"/>
    <property type="match status" value="1"/>
</dbReference>
<dbReference type="NCBIfam" id="NF003592">
    <property type="entry name" value="PRK05254.1-5"/>
    <property type="match status" value="1"/>
</dbReference>
<dbReference type="NCBIfam" id="TIGR00628">
    <property type="entry name" value="ung"/>
    <property type="match status" value="1"/>
</dbReference>
<dbReference type="PANTHER" id="PTHR11264">
    <property type="entry name" value="URACIL-DNA GLYCOSYLASE"/>
    <property type="match status" value="1"/>
</dbReference>
<dbReference type="PANTHER" id="PTHR11264:SF0">
    <property type="entry name" value="URACIL-DNA GLYCOSYLASE"/>
    <property type="match status" value="1"/>
</dbReference>
<dbReference type="Pfam" id="PF03167">
    <property type="entry name" value="UDG"/>
    <property type="match status" value="1"/>
</dbReference>
<dbReference type="SMART" id="SM00986">
    <property type="entry name" value="UDG"/>
    <property type="match status" value="1"/>
</dbReference>
<dbReference type="SMART" id="SM00987">
    <property type="entry name" value="UreE_C"/>
    <property type="match status" value="1"/>
</dbReference>
<dbReference type="SUPFAM" id="SSF52141">
    <property type="entry name" value="Uracil-DNA glycosylase-like"/>
    <property type="match status" value="1"/>
</dbReference>
<dbReference type="PROSITE" id="PS00130">
    <property type="entry name" value="U_DNA_GLYCOSYLASE"/>
    <property type="match status" value="1"/>
</dbReference>
<sequence>MALKQWMLANIADNKGSLLTPDEQARVFCLSADWIRFLSLPDHDTVLLRDTVAAVEGARQLEMVYPAPEHVHRWSYLCPPEQVRVVIVGQDPYCDGSASGLAFGTLAGRPPPPSLNNVFRELARTVDGFQRPASGCLDAWARRGVLLLNTVFTVVHGQPGSHRHLGWQTLSNHVIRRLSERREHLVFMLWGADAHTCEYLIDRRRHLVLKSCHPSPRNTTRAFVGNDHFILANAYLDTHYRETMDWRLCG</sequence>